<name>SODM1_STAA3</name>
<comment type="function">
    <text evidence="2">Destroys superoxide anion radicals which are normally produced within the cells and which are toxic to biological systems. Catalyzes the dismutation of superoxide anion radicals into O2 and H2O2 by successive reduction and oxidation of the transition metal ion at the active site.</text>
</comment>
<comment type="catalytic activity">
    <reaction evidence="2">
        <text>2 superoxide + 2 H(+) = H2O2 + O2</text>
        <dbReference type="Rhea" id="RHEA:20696"/>
        <dbReference type="ChEBI" id="CHEBI:15378"/>
        <dbReference type="ChEBI" id="CHEBI:15379"/>
        <dbReference type="ChEBI" id="CHEBI:16240"/>
        <dbReference type="ChEBI" id="CHEBI:18421"/>
        <dbReference type="EC" id="1.15.1.1"/>
    </reaction>
    <physiologicalReaction direction="left-to-right" evidence="2">
        <dbReference type="Rhea" id="RHEA:20697"/>
    </physiologicalReaction>
</comment>
<comment type="cofactor">
    <cofactor evidence="2">
        <name>Mn(2+)</name>
        <dbReference type="ChEBI" id="CHEBI:29035"/>
    </cofactor>
    <cofactor evidence="2">
        <name>Fe(3+)</name>
        <dbReference type="ChEBI" id="CHEBI:29034"/>
    </cofactor>
    <text evidence="2">Binds 1 Mn(2+) or Fe(3+) ion per subunit.</text>
</comment>
<comment type="subunit">
    <text evidence="1">Homodimer. Can also form a heterodimer with SodM (By similarity).</text>
</comment>
<comment type="similarity">
    <text evidence="3">Belongs to the iron/manganese superoxide dismutase family.</text>
</comment>
<gene>
    <name type="primary">sodA</name>
    <name type="ordered locus">SAUSA300_1513</name>
</gene>
<organism>
    <name type="scientific">Staphylococcus aureus (strain USA300)</name>
    <dbReference type="NCBI Taxonomy" id="367830"/>
    <lineage>
        <taxon>Bacteria</taxon>
        <taxon>Bacillati</taxon>
        <taxon>Bacillota</taxon>
        <taxon>Bacilli</taxon>
        <taxon>Bacillales</taxon>
        <taxon>Staphylococcaceae</taxon>
        <taxon>Staphylococcus</taxon>
    </lineage>
</organism>
<accession>Q2FGH0</accession>
<proteinExistence type="inferred from homology"/>
<dbReference type="EC" id="1.15.1.1" evidence="2"/>
<dbReference type="EMBL" id="CP000255">
    <property type="protein sequence ID" value="ABD22195.1"/>
    <property type="molecule type" value="Genomic_DNA"/>
</dbReference>
<dbReference type="RefSeq" id="WP_000863556.1">
    <property type="nucleotide sequence ID" value="NZ_CP027476.1"/>
</dbReference>
<dbReference type="SMR" id="Q2FGH0"/>
<dbReference type="KEGG" id="saa:SAUSA300_1513"/>
<dbReference type="HOGENOM" id="CLU_031625_0_1_9"/>
<dbReference type="OMA" id="DSLINWD"/>
<dbReference type="Proteomes" id="UP000001939">
    <property type="component" value="Chromosome"/>
</dbReference>
<dbReference type="GO" id="GO:0005737">
    <property type="term" value="C:cytoplasm"/>
    <property type="evidence" value="ECO:0007669"/>
    <property type="project" value="TreeGrafter"/>
</dbReference>
<dbReference type="GO" id="GO:0046872">
    <property type="term" value="F:metal ion binding"/>
    <property type="evidence" value="ECO:0007669"/>
    <property type="project" value="UniProtKB-KW"/>
</dbReference>
<dbReference type="GO" id="GO:0004784">
    <property type="term" value="F:superoxide dismutase activity"/>
    <property type="evidence" value="ECO:0007669"/>
    <property type="project" value="UniProtKB-EC"/>
</dbReference>
<dbReference type="FunFam" id="1.10.287.990:FF:000001">
    <property type="entry name" value="Superoxide dismutase"/>
    <property type="match status" value="1"/>
</dbReference>
<dbReference type="FunFam" id="3.55.40.20:FF:000001">
    <property type="entry name" value="Superoxide dismutase"/>
    <property type="match status" value="1"/>
</dbReference>
<dbReference type="Gene3D" id="1.10.287.990">
    <property type="entry name" value="Fe,Mn superoxide dismutase (SOD) domain"/>
    <property type="match status" value="1"/>
</dbReference>
<dbReference type="Gene3D" id="3.55.40.20">
    <property type="entry name" value="Iron/manganese superoxide dismutase, C-terminal domain"/>
    <property type="match status" value="1"/>
</dbReference>
<dbReference type="InterPro" id="IPR001189">
    <property type="entry name" value="Mn/Fe_SOD"/>
</dbReference>
<dbReference type="InterPro" id="IPR019833">
    <property type="entry name" value="Mn/Fe_SOD_BS"/>
</dbReference>
<dbReference type="InterPro" id="IPR019832">
    <property type="entry name" value="Mn/Fe_SOD_C"/>
</dbReference>
<dbReference type="InterPro" id="IPR019831">
    <property type="entry name" value="Mn/Fe_SOD_N"/>
</dbReference>
<dbReference type="InterPro" id="IPR036324">
    <property type="entry name" value="Mn/Fe_SOD_N_sf"/>
</dbReference>
<dbReference type="InterPro" id="IPR036314">
    <property type="entry name" value="SOD_C_sf"/>
</dbReference>
<dbReference type="PANTHER" id="PTHR43595">
    <property type="entry name" value="37S RIBOSOMAL PROTEIN S26, MITOCHONDRIAL"/>
    <property type="match status" value="1"/>
</dbReference>
<dbReference type="PANTHER" id="PTHR43595:SF2">
    <property type="entry name" value="SMALL RIBOSOMAL SUBUNIT PROTEIN MS42"/>
    <property type="match status" value="1"/>
</dbReference>
<dbReference type="Pfam" id="PF02777">
    <property type="entry name" value="Sod_Fe_C"/>
    <property type="match status" value="1"/>
</dbReference>
<dbReference type="Pfam" id="PF00081">
    <property type="entry name" value="Sod_Fe_N"/>
    <property type="match status" value="1"/>
</dbReference>
<dbReference type="PIRSF" id="PIRSF000349">
    <property type="entry name" value="SODismutase"/>
    <property type="match status" value="1"/>
</dbReference>
<dbReference type="PRINTS" id="PR01703">
    <property type="entry name" value="MNSODISMTASE"/>
</dbReference>
<dbReference type="SUPFAM" id="SSF54719">
    <property type="entry name" value="Fe,Mn superoxide dismutase (SOD), C-terminal domain"/>
    <property type="match status" value="1"/>
</dbReference>
<dbReference type="SUPFAM" id="SSF46609">
    <property type="entry name" value="Fe,Mn superoxide dismutase (SOD), N-terminal domain"/>
    <property type="match status" value="1"/>
</dbReference>
<dbReference type="PROSITE" id="PS00088">
    <property type="entry name" value="SOD_MN"/>
    <property type="match status" value="1"/>
</dbReference>
<sequence>MAFELPKLPYAFDALEPHFDKETMEIHHDRHHNTYVTKLNAAVEGTDLESKSIEEIVANLDSVPANIQTAVRNNGGGHLNHSLFWELLSPNSEEKGTVVEKIKEQWGSLEEFKKEFADKAAARFGSGWAWLVVNNGQLEIVTTPNQDNPLTEGKTPILGLDVWEHAYYLKYQNKRPDYIGAFWNVVNWEKVDELYNATK</sequence>
<evidence type="ECO:0000250" key="1"/>
<evidence type="ECO:0000250" key="2">
    <source>
        <dbReference type="UniProtKB" id="P80293"/>
    </source>
</evidence>
<evidence type="ECO:0000305" key="3"/>
<protein>
    <recommendedName>
        <fullName>Superoxide dismutase [Mn/Fe] 1</fullName>
        <ecNumber evidence="2">1.15.1.1</ecNumber>
    </recommendedName>
</protein>
<keyword id="KW-0408">Iron</keyword>
<keyword id="KW-0464">Manganese</keyword>
<keyword id="KW-0479">Metal-binding</keyword>
<keyword id="KW-0560">Oxidoreductase</keyword>
<keyword id="KW-0346">Stress response</keyword>
<reference key="1">
    <citation type="journal article" date="2006" name="Lancet">
        <title>Complete genome sequence of USA300, an epidemic clone of community-acquired meticillin-resistant Staphylococcus aureus.</title>
        <authorList>
            <person name="Diep B.A."/>
            <person name="Gill S.R."/>
            <person name="Chang R.F."/>
            <person name="Phan T.H."/>
            <person name="Chen J.H."/>
            <person name="Davidson M.G."/>
            <person name="Lin F."/>
            <person name="Lin J."/>
            <person name="Carleton H.A."/>
            <person name="Mongodin E.F."/>
            <person name="Sensabaugh G.F."/>
            <person name="Perdreau-Remington F."/>
        </authorList>
    </citation>
    <scope>NUCLEOTIDE SEQUENCE [LARGE SCALE GENOMIC DNA]</scope>
    <source>
        <strain>USA300</strain>
    </source>
</reference>
<feature type="chain" id="PRO_0000293962" description="Superoxide dismutase [Mn/Fe] 1">
    <location>
        <begin position="1"/>
        <end position="199"/>
    </location>
</feature>
<feature type="binding site" evidence="2">
    <location>
        <position position="27"/>
    </location>
    <ligand>
        <name>Fe(3+)</name>
        <dbReference type="ChEBI" id="CHEBI:29034"/>
    </ligand>
</feature>
<feature type="binding site" evidence="2">
    <location>
        <position position="27"/>
    </location>
    <ligand>
        <name>Mn(2+)</name>
        <dbReference type="ChEBI" id="CHEBI:29035"/>
    </ligand>
</feature>
<feature type="binding site" evidence="2">
    <location>
        <position position="81"/>
    </location>
    <ligand>
        <name>Fe(3+)</name>
        <dbReference type="ChEBI" id="CHEBI:29034"/>
    </ligand>
</feature>
<feature type="binding site" evidence="2">
    <location>
        <position position="81"/>
    </location>
    <ligand>
        <name>Mn(2+)</name>
        <dbReference type="ChEBI" id="CHEBI:29035"/>
    </ligand>
</feature>
<feature type="binding site" evidence="2">
    <location>
        <position position="161"/>
    </location>
    <ligand>
        <name>Fe(3+)</name>
        <dbReference type="ChEBI" id="CHEBI:29034"/>
    </ligand>
</feature>
<feature type="binding site" evidence="2">
    <location>
        <position position="161"/>
    </location>
    <ligand>
        <name>Mn(2+)</name>
        <dbReference type="ChEBI" id="CHEBI:29035"/>
    </ligand>
</feature>
<feature type="binding site" evidence="2">
    <location>
        <position position="165"/>
    </location>
    <ligand>
        <name>Fe(3+)</name>
        <dbReference type="ChEBI" id="CHEBI:29034"/>
    </ligand>
</feature>
<feature type="binding site" evidence="2">
    <location>
        <position position="165"/>
    </location>
    <ligand>
        <name>Mn(2+)</name>
        <dbReference type="ChEBI" id="CHEBI:29035"/>
    </ligand>
</feature>